<accession>Q9RV25</accession>
<gene>
    <name evidence="1" type="primary">deoC</name>
    <name type="ordered locus">DR_1205</name>
</gene>
<organism>
    <name type="scientific">Deinococcus radiodurans (strain ATCC 13939 / DSM 20539 / JCM 16871 / CCUG 27074 / LMG 4051 / NBRC 15346 / NCIMB 9279 / VKM B-1422 / R1)</name>
    <dbReference type="NCBI Taxonomy" id="243230"/>
    <lineage>
        <taxon>Bacteria</taxon>
        <taxon>Thermotogati</taxon>
        <taxon>Deinococcota</taxon>
        <taxon>Deinococci</taxon>
        <taxon>Deinococcales</taxon>
        <taxon>Deinococcaceae</taxon>
        <taxon>Deinococcus</taxon>
    </lineage>
</organism>
<comment type="function">
    <text evidence="1">Catalyzes a reversible aldol reaction between acetaldehyde and D-glyceraldehyde 3-phosphate to generate 2-deoxy-D-ribose 5-phosphate.</text>
</comment>
<comment type="catalytic activity">
    <reaction evidence="1">
        <text>2-deoxy-D-ribose 5-phosphate = D-glyceraldehyde 3-phosphate + acetaldehyde</text>
        <dbReference type="Rhea" id="RHEA:12821"/>
        <dbReference type="ChEBI" id="CHEBI:15343"/>
        <dbReference type="ChEBI" id="CHEBI:59776"/>
        <dbReference type="ChEBI" id="CHEBI:62877"/>
        <dbReference type="EC" id="4.1.2.4"/>
    </reaction>
</comment>
<comment type="pathway">
    <text evidence="1">Carbohydrate degradation; 2-deoxy-D-ribose 1-phosphate degradation; D-glyceraldehyde 3-phosphate and acetaldehyde from 2-deoxy-alpha-D-ribose 1-phosphate: step 2/2.</text>
</comment>
<comment type="subcellular location">
    <subcellularLocation>
        <location evidence="1">Cytoplasm</location>
    </subcellularLocation>
</comment>
<comment type="similarity">
    <text evidence="1">Belongs to the DeoC/FbaB aldolase family. DeoC type 1 subfamily.</text>
</comment>
<reference key="1">
    <citation type="journal article" date="1999" name="Science">
        <title>Genome sequence of the radioresistant bacterium Deinococcus radiodurans R1.</title>
        <authorList>
            <person name="White O."/>
            <person name="Eisen J.A."/>
            <person name="Heidelberg J.F."/>
            <person name="Hickey E.K."/>
            <person name="Peterson J.D."/>
            <person name="Dodson R.J."/>
            <person name="Haft D.H."/>
            <person name="Gwinn M.L."/>
            <person name="Nelson W.C."/>
            <person name="Richardson D.L."/>
            <person name="Moffat K.S."/>
            <person name="Qin H."/>
            <person name="Jiang L."/>
            <person name="Pamphile W."/>
            <person name="Crosby M."/>
            <person name="Shen M."/>
            <person name="Vamathevan J.J."/>
            <person name="Lam P."/>
            <person name="McDonald L.A."/>
            <person name="Utterback T.R."/>
            <person name="Zalewski C."/>
            <person name="Makarova K.S."/>
            <person name="Aravind L."/>
            <person name="Daly M.J."/>
            <person name="Minton K.W."/>
            <person name="Fleischmann R.D."/>
            <person name="Ketchum K.A."/>
            <person name="Nelson K.E."/>
            <person name="Salzberg S.L."/>
            <person name="Smith H.O."/>
            <person name="Venter J.C."/>
            <person name="Fraser C.M."/>
        </authorList>
    </citation>
    <scope>NUCLEOTIDE SEQUENCE [LARGE SCALE GENOMIC DNA]</scope>
    <source>
        <strain>ATCC 13939 / DSM 20539 / JCM 16871 / CCUG 27074 / LMG 4051 / NBRC 15346 / NCIMB 9279 / VKM B-1422 / R1</strain>
    </source>
</reference>
<feature type="chain" id="PRO_0000057231" description="Deoxyribose-phosphate aldolase">
    <location>
        <begin position="1"/>
        <end position="220"/>
    </location>
</feature>
<feature type="active site" description="Proton donor/acceptor" evidence="1">
    <location>
        <position position="89"/>
    </location>
</feature>
<feature type="active site" description="Schiff-base intermediate with acetaldehyde" evidence="1">
    <location>
        <position position="151"/>
    </location>
</feature>
<feature type="active site" description="Proton donor/acceptor" evidence="1">
    <location>
        <position position="180"/>
    </location>
</feature>
<name>DEOC_DEIRA</name>
<keyword id="KW-0963">Cytoplasm</keyword>
<keyword id="KW-0456">Lyase</keyword>
<keyword id="KW-1185">Reference proteome</keyword>
<keyword id="KW-0704">Schiff base</keyword>
<protein>
    <recommendedName>
        <fullName evidence="1">Deoxyribose-phosphate aldolase</fullName>
        <shortName evidence="1">DERA</shortName>
        <ecNumber evidence="1">4.1.2.4</ecNumber>
    </recommendedName>
    <alternativeName>
        <fullName evidence="1">2-deoxy-D-ribose 5-phosphate aldolase</fullName>
    </alternativeName>
    <alternativeName>
        <fullName evidence="1">Phosphodeoxyriboaldolase</fullName>
        <shortName evidence="1">Deoxyriboaldolase</shortName>
    </alternativeName>
</protein>
<proteinExistence type="inferred from homology"/>
<evidence type="ECO:0000255" key="1">
    <source>
        <dbReference type="HAMAP-Rule" id="MF_00114"/>
    </source>
</evidence>
<dbReference type="EC" id="4.1.2.4" evidence="1"/>
<dbReference type="EMBL" id="AE000513">
    <property type="protein sequence ID" value="AAF10775.1"/>
    <property type="molecule type" value="Genomic_DNA"/>
</dbReference>
<dbReference type="PIR" id="D75424">
    <property type="entry name" value="D75424"/>
</dbReference>
<dbReference type="RefSeq" id="NP_294929.1">
    <property type="nucleotide sequence ID" value="NC_001263.1"/>
</dbReference>
<dbReference type="RefSeq" id="WP_010887848.1">
    <property type="nucleotide sequence ID" value="NC_001263.1"/>
</dbReference>
<dbReference type="SMR" id="Q9RV25"/>
<dbReference type="FunCoup" id="Q9RV25">
    <property type="interactions" value="269"/>
</dbReference>
<dbReference type="STRING" id="243230.DR_1205"/>
<dbReference type="PaxDb" id="243230-DR_1205"/>
<dbReference type="EnsemblBacteria" id="AAF10775">
    <property type="protein sequence ID" value="AAF10775"/>
    <property type="gene ID" value="DR_1205"/>
</dbReference>
<dbReference type="GeneID" id="69517451"/>
<dbReference type="KEGG" id="dra:DR_1205"/>
<dbReference type="PATRIC" id="fig|243230.17.peg.1405"/>
<dbReference type="eggNOG" id="COG0274">
    <property type="taxonomic scope" value="Bacteria"/>
</dbReference>
<dbReference type="HOGENOM" id="CLU_053595_0_1_0"/>
<dbReference type="InParanoid" id="Q9RV25"/>
<dbReference type="OrthoDB" id="9778711at2"/>
<dbReference type="UniPathway" id="UPA00002">
    <property type="reaction ID" value="UER00468"/>
</dbReference>
<dbReference type="Proteomes" id="UP000002524">
    <property type="component" value="Chromosome 1"/>
</dbReference>
<dbReference type="GO" id="GO:0005737">
    <property type="term" value="C:cytoplasm"/>
    <property type="evidence" value="ECO:0007669"/>
    <property type="project" value="UniProtKB-SubCell"/>
</dbReference>
<dbReference type="GO" id="GO:0004139">
    <property type="term" value="F:deoxyribose-phosphate aldolase activity"/>
    <property type="evidence" value="ECO:0000318"/>
    <property type="project" value="GO_Central"/>
</dbReference>
<dbReference type="GO" id="GO:0006018">
    <property type="term" value="P:2-deoxyribose 1-phosphate catabolic process"/>
    <property type="evidence" value="ECO:0007669"/>
    <property type="project" value="UniProtKB-UniRule"/>
</dbReference>
<dbReference type="GO" id="GO:0016052">
    <property type="term" value="P:carbohydrate catabolic process"/>
    <property type="evidence" value="ECO:0000318"/>
    <property type="project" value="GO_Central"/>
</dbReference>
<dbReference type="GO" id="GO:0009264">
    <property type="term" value="P:deoxyribonucleotide catabolic process"/>
    <property type="evidence" value="ECO:0000318"/>
    <property type="project" value="GO_Central"/>
</dbReference>
<dbReference type="CDD" id="cd00959">
    <property type="entry name" value="DeoC"/>
    <property type="match status" value="1"/>
</dbReference>
<dbReference type="FunFam" id="3.20.20.70:FF:000198">
    <property type="entry name" value="Deoxyribose-phosphate aldolase"/>
    <property type="match status" value="1"/>
</dbReference>
<dbReference type="Gene3D" id="3.20.20.70">
    <property type="entry name" value="Aldolase class I"/>
    <property type="match status" value="1"/>
</dbReference>
<dbReference type="HAMAP" id="MF_00114">
    <property type="entry name" value="DeoC_type1"/>
    <property type="match status" value="1"/>
</dbReference>
<dbReference type="InterPro" id="IPR013785">
    <property type="entry name" value="Aldolase_TIM"/>
</dbReference>
<dbReference type="InterPro" id="IPR011343">
    <property type="entry name" value="DeoC"/>
</dbReference>
<dbReference type="InterPro" id="IPR002915">
    <property type="entry name" value="DeoC/FbaB/LacD_aldolase"/>
</dbReference>
<dbReference type="InterPro" id="IPR028581">
    <property type="entry name" value="DeoC_typeI"/>
</dbReference>
<dbReference type="NCBIfam" id="TIGR00126">
    <property type="entry name" value="deoC"/>
    <property type="match status" value="1"/>
</dbReference>
<dbReference type="PANTHER" id="PTHR10889">
    <property type="entry name" value="DEOXYRIBOSE-PHOSPHATE ALDOLASE"/>
    <property type="match status" value="1"/>
</dbReference>
<dbReference type="PANTHER" id="PTHR10889:SF1">
    <property type="entry name" value="DEOXYRIBOSE-PHOSPHATE ALDOLASE"/>
    <property type="match status" value="1"/>
</dbReference>
<dbReference type="Pfam" id="PF01791">
    <property type="entry name" value="DeoC"/>
    <property type="match status" value="1"/>
</dbReference>
<dbReference type="PIRSF" id="PIRSF001357">
    <property type="entry name" value="DeoC"/>
    <property type="match status" value="1"/>
</dbReference>
<dbReference type="SMART" id="SM01133">
    <property type="entry name" value="DeoC"/>
    <property type="match status" value="1"/>
</dbReference>
<dbReference type="SUPFAM" id="SSF51569">
    <property type="entry name" value="Aldolase"/>
    <property type="match status" value="1"/>
</dbReference>
<sequence length="220" mass="22792">MSLASYIDHTLLKATATLADIRTLCEEAREHSFYAVCINPVFIPHARAWLEGSDVKVATVCGFPLGAISSEQKALEARLSAETGADEIDMVIHIGSALAGDWDAVEADVRAVRRAVPEQVLKVIIETCYLTDEQKRLATEVAVQGGADFVKTSTGFGTGGATVDDVRLMAEVIGGRAGLKAAGGVRTPADAQAMIEAGATRLGTSGGVGLVSGGENGAGY</sequence>